<protein>
    <recommendedName>
        <fullName evidence="1">Large ribosomal subunit protein bL31B</fullName>
    </recommendedName>
    <alternativeName>
        <fullName evidence="2">50S ribosomal protein L31 type B</fullName>
    </alternativeName>
</protein>
<reference key="1">
    <citation type="journal article" date="2011" name="J. Bacteriol.">
        <title>Comparative genomics of 28 Salmonella enterica isolates: evidence for CRISPR-mediated adaptive sublineage evolution.</title>
        <authorList>
            <person name="Fricke W.F."/>
            <person name="Mammel M.K."/>
            <person name="McDermott P.F."/>
            <person name="Tartera C."/>
            <person name="White D.G."/>
            <person name="Leclerc J.E."/>
            <person name="Ravel J."/>
            <person name="Cebula T.A."/>
        </authorList>
    </citation>
    <scope>NUCLEOTIDE SEQUENCE [LARGE SCALE GENOMIC DNA]</scope>
    <source>
        <strain>CT_02021853</strain>
    </source>
</reference>
<gene>
    <name evidence="1" type="primary">rpmE2</name>
    <name type="ordered locus">SeD_A0513</name>
</gene>
<feature type="chain" id="PRO_1000126832" description="Large ribosomal subunit protein bL31B">
    <location>
        <begin position="1"/>
        <end position="86"/>
    </location>
</feature>
<accession>B5FKX3</accession>
<evidence type="ECO:0000255" key="1">
    <source>
        <dbReference type="HAMAP-Rule" id="MF_00502"/>
    </source>
</evidence>
<evidence type="ECO:0000305" key="2"/>
<organism>
    <name type="scientific">Salmonella dublin (strain CT_02021853)</name>
    <dbReference type="NCBI Taxonomy" id="439851"/>
    <lineage>
        <taxon>Bacteria</taxon>
        <taxon>Pseudomonadati</taxon>
        <taxon>Pseudomonadota</taxon>
        <taxon>Gammaproteobacteria</taxon>
        <taxon>Enterobacterales</taxon>
        <taxon>Enterobacteriaceae</taxon>
        <taxon>Salmonella</taxon>
    </lineage>
</organism>
<sequence length="86" mass="9815">MKPDIHPVYRTVVFHDTSANEYVKVGSTIKTEREIELDGVTYPYVTIDVSSKSHPFYTGRQKTFDSESSAARFQKRFGHFIGAKRG</sequence>
<proteinExistence type="inferred from homology"/>
<keyword id="KW-0687">Ribonucleoprotein</keyword>
<keyword id="KW-0689">Ribosomal protein</keyword>
<dbReference type="EMBL" id="CP001144">
    <property type="protein sequence ID" value="ACH75050.1"/>
    <property type="molecule type" value="Genomic_DNA"/>
</dbReference>
<dbReference type="RefSeq" id="WP_000801415.1">
    <property type="nucleotide sequence ID" value="NC_011205.1"/>
</dbReference>
<dbReference type="SMR" id="B5FKX3"/>
<dbReference type="KEGG" id="sed:SeD_A0513"/>
<dbReference type="HOGENOM" id="CLU_114306_2_1_6"/>
<dbReference type="Proteomes" id="UP000008322">
    <property type="component" value="Chromosome"/>
</dbReference>
<dbReference type="GO" id="GO:1990904">
    <property type="term" value="C:ribonucleoprotein complex"/>
    <property type="evidence" value="ECO:0007669"/>
    <property type="project" value="UniProtKB-KW"/>
</dbReference>
<dbReference type="GO" id="GO:0005840">
    <property type="term" value="C:ribosome"/>
    <property type="evidence" value="ECO:0007669"/>
    <property type="project" value="UniProtKB-KW"/>
</dbReference>
<dbReference type="GO" id="GO:0003735">
    <property type="term" value="F:structural constituent of ribosome"/>
    <property type="evidence" value="ECO:0007669"/>
    <property type="project" value="InterPro"/>
</dbReference>
<dbReference type="GO" id="GO:0006412">
    <property type="term" value="P:translation"/>
    <property type="evidence" value="ECO:0007669"/>
    <property type="project" value="UniProtKB-UniRule"/>
</dbReference>
<dbReference type="Gene3D" id="4.10.830.30">
    <property type="entry name" value="Ribosomal protein L31"/>
    <property type="match status" value="1"/>
</dbReference>
<dbReference type="HAMAP" id="MF_00502">
    <property type="entry name" value="Ribosomal_bL31_2"/>
    <property type="match status" value="1"/>
</dbReference>
<dbReference type="InterPro" id="IPR034704">
    <property type="entry name" value="Ribosomal_bL28/bL31-like_sf"/>
</dbReference>
<dbReference type="InterPro" id="IPR002150">
    <property type="entry name" value="Ribosomal_bL31"/>
</dbReference>
<dbReference type="InterPro" id="IPR027493">
    <property type="entry name" value="Ribosomal_bL31_B"/>
</dbReference>
<dbReference type="InterPro" id="IPR042105">
    <property type="entry name" value="Ribosomal_bL31_sf"/>
</dbReference>
<dbReference type="NCBIfam" id="TIGR00105">
    <property type="entry name" value="L31"/>
    <property type="match status" value="1"/>
</dbReference>
<dbReference type="NCBIfam" id="NF002462">
    <property type="entry name" value="PRK01678.1"/>
    <property type="match status" value="1"/>
</dbReference>
<dbReference type="PANTHER" id="PTHR33280">
    <property type="entry name" value="50S RIBOSOMAL PROTEIN L31, CHLOROPLASTIC"/>
    <property type="match status" value="1"/>
</dbReference>
<dbReference type="PANTHER" id="PTHR33280:SF1">
    <property type="entry name" value="LARGE RIBOSOMAL SUBUNIT PROTEIN BL31C"/>
    <property type="match status" value="1"/>
</dbReference>
<dbReference type="Pfam" id="PF01197">
    <property type="entry name" value="Ribosomal_L31"/>
    <property type="match status" value="1"/>
</dbReference>
<dbReference type="PRINTS" id="PR01249">
    <property type="entry name" value="RIBOSOMALL31"/>
</dbReference>
<dbReference type="SUPFAM" id="SSF143800">
    <property type="entry name" value="L28p-like"/>
    <property type="match status" value="1"/>
</dbReference>
<comment type="subunit">
    <text evidence="1">Part of the 50S ribosomal subunit.</text>
</comment>
<comment type="similarity">
    <text evidence="1">Belongs to the bacterial ribosomal protein bL31 family. Type B subfamily.</text>
</comment>
<name>RL31B_SALDC</name>